<feature type="chain" id="PRO_0000127827" description="Uncharacterized protein AF_0095">
    <location>
        <begin position="1"/>
        <end position="108"/>
    </location>
</feature>
<feature type="transmembrane region" description="Helical" evidence="1">
    <location>
        <begin position="15"/>
        <end position="37"/>
    </location>
</feature>
<keyword id="KW-0472">Membrane</keyword>
<keyword id="KW-1185">Reference proteome</keyword>
<keyword id="KW-0812">Transmembrane</keyword>
<keyword id="KW-1133">Transmembrane helix</keyword>
<sequence length="108" mass="13046">MERWDPLTWHCIISSYYFYIFWNFFLPMFIVYRGFGLLDPFAVKGRYTSDCYIFLLSEEPFENVTHCSSQRQSWALWSSHQRISRLQRLTTEHHKANRGQATIRKTLA</sequence>
<gene>
    <name type="ordered locus">AF_0095</name>
</gene>
<evidence type="ECO:0000255" key="1"/>
<evidence type="ECO:0000305" key="2"/>
<comment type="subcellular location">
    <subcellularLocation>
        <location evidence="2">Membrane</location>
        <topology evidence="2">Single-pass membrane protein</topology>
    </subcellularLocation>
</comment>
<protein>
    <recommendedName>
        <fullName>Uncharacterized protein AF_0095</fullName>
    </recommendedName>
</protein>
<reference key="1">
    <citation type="journal article" date="1997" name="Nature">
        <title>The complete genome sequence of the hyperthermophilic, sulphate-reducing archaeon Archaeoglobus fulgidus.</title>
        <authorList>
            <person name="Klenk H.-P."/>
            <person name="Clayton R.A."/>
            <person name="Tomb J.-F."/>
            <person name="White O."/>
            <person name="Nelson K.E."/>
            <person name="Ketchum K.A."/>
            <person name="Dodson R.J."/>
            <person name="Gwinn M.L."/>
            <person name="Hickey E.K."/>
            <person name="Peterson J.D."/>
            <person name="Richardson D.L."/>
            <person name="Kerlavage A.R."/>
            <person name="Graham D.E."/>
            <person name="Kyrpides N.C."/>
            <person name="Fleischmann R.D."/>
            <person name="Quackenbush J."/>
            <person name="Lee N.H."/>
            <person name="Sutton G.G."/>
            <person name="Gill S.R."/>
            <person name="Kirkness E.F."/>
            <person name="Dougherty B.A."/>
            <person name="McKenney K."/>
            <person name="Adams M.D."/>
            <person name="Loftus B.J."/>
            <person name="Peterson S.N."/>
            <person name="Reich C.I."/>
            <person name="McNeil L.K."/>
            <person name="Badger J.H."/>
            <person name="Glodek A."/>
            <person name="Zhou L."/>
            <person name="Overbeek R."/>
            <person name="Gocayne J.D."/>
            <person name="Weidman J.F."/>
            <person name="McDonald L.A."/>
            <person name="Utterback T.R."/>
            <person name="Cotton M.D."/>
            <person name="Spriggs T."/>
            <person name="Artiach P."/>
            <person name="Kaine B.P."/>
            <person name="Sykes S.M."/>
            <person name="Sadow P.W."/>
            <person name="D'Andrea K.P."/>
            <person name="Bowman C."/>
            <person name="Fujii C."/>
            <person name="Garland S.A."/>
            <person name="Mason T.M."/>
            <person name="Olsen G.J."/>
            <person name="Fraser C.M."/>
            <person name="Smith H.O."/>
            <person name="Woese C.R."/>
            <person name="Venter J.C."/>
        </authorList>
    </citation>
    <scope>NUCLEOTIDE SEQUENCE [LARGE SCALE GENOMIC DNA]</scope>
    <source>
        <strain>ATCC 49558 / DSM 4304 / JCM 9628 / NBRC 100126 / VC-16</strain>
    </source>
</reference>
<organism>
    <name type="scientific">Archaeoglobus fulgidus (strain ATCC 49558 / DSM 4304 / JCM 9628 / NBRC 100126 / VC-16)</name>
    <dbReference type="NCBI Taxonomy" id="224325"/>
    <lineage>
        <taxon>Archaea</taxon>
        <taxon>Methanobacteriati</taxon>
        <taxon>Methanobacteriota</taxon>
        <taxon>Archaeoglobi</taxon>
        <taxon>Archaeoglobales</taxon>
        <taxon>Archaeoglobaceae</taxon>
        <taxon>Archaeoglobus</taxon>
    </lineage>
</organism>
<dbReference type="EMBL" id="AE000782">
    <property type="protein sequence ID" value="AAB91145.1"/>
    <property type="molecule type" value="Genomic_DNA"/>
</dbReference>
<dbReference type="PIR" id="G69261">
    <property type="entry name" value="G69261"/>
</dbReference>
<dbReference type="STRING" id="224325.AF_0095"/>
<dbReference type="PaxDb" id="224325-AF_0095"/>
<dbReference type="EnsemblBacteria" id="AAB91145">
    <property type="protein sequence ID" value="AAB91145"/>
    <property type="gene ID" value="AF_0095"/>
</dbReference>
<dbReference type="KEGG" id="afu:AF_0095"/>
<dbReference type="HOGENOM" id="CLU_2190892_0_0_2"/>
<dbReference type="Proteomes" id="UP000002199">
    <property type="component" value="Chromosome"/>
</dbReference>
<dbReference type="GO" id="GO:0016020">
    <property type="term" value="C:membrane"/>
    <property type="evidence" value="ECO:0007669"/>
    <property type="project" value="UniProtKB-SubCell"/>
</dbReference>
<accession>O30141</accession>
<name>Y095_ARCFU</name>
<proteinExistence type="predicted"/>